<reference key="1">
    <citation type="journal article" date="1992" name="Proc. Natl. Acad. Sci. U.S.A.">
        <title>Unusually high conservation of untranslated sequences in cDNAs for Trimeresurus flavoviridis phospholipase A2 isozymes.</title>
        <authorList>
            <person name="Ogawa T."/>
            <person name="Oda N."/>
            <person name="Nakashima K."/>
            <person name="Sasaki H."/>
            <person name="Hattori M."/>
            <person name="Sakaki Y."/>
            <person name="Kihara H."/>
            <person name="Ohno M."/>
        </authorList>
    </citation>
    <scope>NUCLEOTIDE SEQUENCE [MRNA]</scope>
    <source>
        <strain>Tokunoshima</strain>
        <tissue>Venom gland</tissue>
    </source>
</reference>
<reference key="2">
    <citation type="journal article" date="1993" name="Proc. Natl. Acad. Sci. U.S.A.">
        <title>Accelerated evolution of Trimeresurus flavoviridis venom gland phospholipase A2 isozymes.</title>
        <authorList>
            <person name="Nakashima K."/>
            <person name="Ogawa T."/>
            <person name="Oda N."/>
            <person name="Hattori M."/>
            <person name="Sakaki Y."/>
            <person name="Kihara H."/>
            <person name="Ohno M."/>
        </authorList>
    </citation>
    <scope>NUCLEOTIDE SEQUENCE [GENOMIC DNA]</scope>
    <source>
        <strain>Tokunoshima</strain>
        <tissue>Liver</tissue>
    </source>
</reference>
<reference key="3">
    <citation type="journal article" date="1995" name="Proc. Natl. Acad. Sci. U.S.A.">
        <title>Accelerated evolution in the protein-coding regions is universal in crotalinae snake venom gland phospholipase A2 isozyme genes.</title>
        <authorList>
            <person name="Nakashima K."/>
            <person name="Nobuhisa I."/>
            <person name="Deshimaru M."/>
            <person name="Nakai M."/>
            <person name="Ogawa T."/>
            <person name="Shimohigashi Y."/>
            <person name="Fukumaki Y."/>
            <person name="Hattori M."/>
            <person name="Sakaki Y."/>
            <person name="Hattori S."/>
            <person name="Ohno M."/>
        </authorList>
    </citation>
    <scope>NUCLEOTIDE SEQUENCE [GENOMIC DNA]</scope>
    <source>
        <tissue>Liver</tissue>
    </source>
</reference>
<reference key="4">
    <citation type="journal article" date="1990" name="Toxicon">
        <title>Purification and amino acid sequence of basic protein I, a lysine-49-phospholipase A2 with low activity, from the venom of Trimeresurus flavoviridis (Habu snake).</title>
        <authorList>
            <person name="Yoshizumi K."/>
            <person name="Liu S.-Y."/>
            <person name="Miyata T."/>
            <person name="Saita S."/>
            <person name="Ohno M."/>
            <person name="Iwanaga S."/>
            <person name="Kihara H."/>
        </authorList>
    </citation>
    <scope>PROTEIN SEQUENCE OF 17-138</scope>
    <scope>FUNCTION</scope>
    <scope>COFACTOR</scope>
    <source>
        <tissue>Venom</tissue>
    </source>
</reference>
<evidence type="ECO:0000250" key="1"/>
<evidence type="ECO:0000250" key="2">
    <source>
        <dbReference type="UniProtKB" id="Q90249"/>
    </source>
</evidence>
<evidence type="ECO:0000255" key="3">
    <source>
        <dbReference type="PROSITE-ProRule" id="PRU10035"/>
    </source>
</evidence>
<evidence type="ECO:0000255" key="4">
    <source>
        <dbReference type="PROSITE-ProRule" id="PRU10036"/>
    </source>
</evidence>
<evidence type="ECO:0000269" key="5">
    <source>
    </source>
</evidence>
<evidence type="ECO:0000303" key="6">
    <source>
    </source>
</evidence>
<evidence type="ECO:0000303" key="7">
    <source>
    </source>
</evidence>
<evidence type="ECO:0000303" key="8">
    <source>
    </source>
</evidence>
<evidence type="ECO:0000305" key="9"/>
<proteinExistence type="evidence at protein level"/>
<feature type="signal peptide" evidence="5">
    <location>
        <begin position="1"/>
        <end position="16"/>
    </location>
</feature>
<feature type="chain" id="PRO_0000022953" description="Basic phospholipase A2 BP-I">
    <location>
        <begin position="17"/>
        <end position="138"/>
    </location>
</feature>
<feature type="active site" evidence="1">
    <location>
        <position position="63"/>
    </location>
</feature>
<feature type="active site" evidence="1">
    <location>
        <position position="106"/>
    </location>
</feature>
<feature type="binding site" evidence="1">
    <location>
        <position position="45"/>
    </location>
    <ligand>
        <name>Ca(2+)</name>
        <dbReference type="ChEBI" id="CHEBI:29108"/>
    </ligand>
</feature>
<feature type="binding site" evidence="1">
    <location>
        <position position="47"/>
    </location>
    <ligand>
        <name>Ca(2+)</name>
        <dbReference type="ChEBI" id="CHEBI:29108"/>
    </ligand>
</feature>
<feature type="disulfide bond" evidence="2">
    <location>
        <begin position="42"/>
        <end position="132"/>
    </location>
</feature>
<feature type="disulfide bond" evidence="2">
    <location>
        <begin position="44"/>
        <end position="60"/>
    </location>
</feature>
<feature type="disulfide bond" evidence="2">
    <location>
        <begin position="59"/>
        <end position="112"/>
    </location>
</feature>
<feature type="disulfide bond" evidence="2">
    <location>
        <begin position="65"/>
        <end position="138"/>
    </location>
</feature>
<feature type="disulfide bond" evidence="2">
    <location>
        <begin position="66"/>
        <end position="105"/>
    </location>
</feature>
<feature type="disulfide bond" evidence="2">
    <location>
        <begin position="73"/>
        <end position="98"/>
    </location>
</feature>
<feature type="disulfide bond" evidence="2">
    <location>
        <begin position="91"/>
        <end position="103"/>
    </location>
</feature>
<sequence length="138" mass="15537">MRTLWIMAVLLLGVDGSLVQLWKMIFQETGKEAAKNYGLYGCNCGVGRRGKPKDATDSCCYVHKCCYKKVTGCDPKMDSYSYSWKNKAIVCGEKNPPCLKQVCECDKAVAICLRENLGTYNKKYTIYPKPFCKKADTC</sequence>
<keyword id="KW-0903">Direct protein sequencing</keyword>
<keyword id="KW-1015">Disulfide bond</keyword>
<keyword id="KW-0378">Hydrolase</keyword>
<keyword id="KW-0442">Lipid degradation</keyword>
<keyword id="KW-0443">Lipid metabolism</keyword>
<keyword id="KW-0479">Metal-binding</keyword>
<keyword id="KW-0959">Myotoxin</keyword>
<keyword id="KW-0964">Secreted</keyword>
<keyword id="KW-0732">Signal</keyword>
<keyword id="KW-0800">Toxin</keyword>
<protein>
    <recommendedName>
        <fullName>Basic phospholipase A2 BP-I</fullName>
        <shortName>svPLA2</shortName>
        <ecNumber>3.1.1.4</ecNumber>
    </recommendedName>
    <alternativeName>
        <fullName evidence="6 7 8">Basic protein I</fullName>
        <shortName evidence="6">BP1</shortName>
        <shortName evidence="7 8">BPI</shortName>
    </alternativeName>
    <alternativeName>
        <fullName>Phosphatidylcholine 2-acylhydrolase</fullName>
    </alternativeName>
</protein>
<organism>
    <name type="scientific">Protobothrops flavoviridis</name>
    <name type="common">Habu</name>
    <name type="synonym">Trimeresurus flavoviridis</name>
    <dbReference type="NCBI Taxonomy" id="88087"/>
    <lineage>
        <taxon>Eukaryota</taxon>
        <taxon>Metazoa</taxon>
        <taxon>Chordata</taxon>
        <taxon>Craniata</taxon>
        <taxon>Vertebrata</taxon>
        <taxon>Euteleostomi</taxon>
        <taxon>Lepidosauria</taxon>
        <taxon>Squamata</taxon>
        <taxon>Bifurcata</taxon>
        <taxon>Unidentata</taxon>
        <taxon>Episquamata</taxon>
        <taxon>Toxicofera</taxon>
        <taxon>Serpentes</taxon>
        <taxon>Colubroidea</taxon>
        <taxon>Viperidae</taxon>
        <taxon>Crotalinae</taxon>
        <taxon>Protobothrops</taxon>
    </lineage>
</organism>
<name>PA2B1_PROFL</name>
<dbReference type="EC" id="3.1.1.4"/>
<dbReference type="EMBL" id="D10718">
    <property type="protein sequence ID" value="BAA01561.1"/>
    <property type="molecule type" value="mRNA"/>
</dbReference>
<dbReference type="EMBL" id="D13383">
    <property type="protein sequence ID" value="BAA02651.1"/>
    <property type="molecule type" value="Genomic_DNA"/>
</dbReference>
<dbReference type="PIR" id="D48188">
    <property type="entry name" value="D48188"/>
</dbReference>
<dbReference type="SMR" id="P0DJJ8"/>
<dbReference type="GO" id="GO:0005576">
    <property type="term" value="C:extracellular region"/>
    <property type="evidence" value="ECO:0007669"/>
    <property type="project" value="UniProtKB-SubCell"/>
</dbReference>
<dbReference type="GO" id="GO:0005509">
    <property type="term" value="F:calcium ion binding"/>
    <property type="evidence" value="ECO:0007669"/>
    <property type="project" value="InterPro"/>
</dbReference>
<dbReference type="GO" id="GO:0047498">
    <property type="term" value="F:calcium-dependent phospholipase A2 activity"/>
    <property type="evidence" value="ECO:0007669"/>
    <property type="project" value="TreeGrafter"/>
</dbReference>
<dbReference type="GO" id="GO:0005543">
    <property type="term" value="F:phospholipid binding"/>
    <property type="evidence" value="ECO:0007669"/>
    <property type="project" value="TreeGrafter"/>
</dbReference>
<dbReference type="GO" id="GO:0090729">
    <property type="term" value="F:toxin activity"/>
    <property type="evidence" value="ECO:0007669"/>
    <property type="project" value="UniProtKB-KW"/>
</dbReference>
<dbReference type="GO" id="GO:0050482">
    <property type="term" value="P:arachidonate secretion"/>
    <property type="evidence" value="ECO:0007669"/>
    <property type="project" value="InterPro"/>
</dbReference>
<dbReference type="GO" id="GO:0016042">
    <property type="term" value="P:lipid catabolic process"/>
    <property type="evidence" value="ECO:0007669"/>
    <property type="project" value="UniProtKB-KW"/>
</dbReference>
<dbReference type="GO" id="GO:0042130">
    <property type="term" value="P:negative regulation of T cell proliferation"/>
    <property type="evidence" value="ECO:0007669"/>
    <property type="project" value="TreeGrafter"/>
</dbReference>
<dbReference type="GO" id="GO:0006644">
    <property type="term" value="P:phospholipid metabolic process"/>
    <property type="evidence" value="ECO:0007669"/>
    <property type="project" value="InterPro"/>
</dbReference>
<dbReference type="CDD" id="cd00125">
    <property type="entry name" value="PLA2c"/>
    <property type="match status" value="1"/>
</dbReference>
<dbReference type="FunFam" id="1.20.90.10:FF:000001">
    <property type="entry name" value="Basic phospholipase A2 homolog"/>
    <property type="match status" value="1"/>
</dbReference>
<dbReference type="Gene3D" id="1.20.90.10">
    <property type="entry name" value="Phospholipase A2 domain"/>
    <property type="match status" value="1"/>
</dbReference>
<dbReference type="InterPro" id="IPR001211">
    <property type="entry name" value="PLipase_A2"/>
</dbReference>
<dbReference type="InterPro" id="IPR033112">
    <property type="entry name" value="PLipase_A2_Asp_AS"/>
</dbReference>
<dbReference type="InterPro" id="IPR016090">
    <property type="entry name" value="PLipase_A2_dom"/>
</dbReference>
<dbReference type="InterPro" id="IPR036444">
    <property type="entry name" value="PLipase_A2_dom_sf"/>
</dbReference>
<dbReference type="InterPro" id="IPR033113">
    <property type="entry name" value="PLipase_A2_His_AS"/>
</dbReference>
<dbReference type="PANTHER" id="PTHR11716">
    <property type="entry name" value="PHOSPHOLIPASE A2 FAMILY MEMBER"/>
    <property type="match status" value="1"/>
</dbReference>
<dbReference type="PANTHER" id="PTHR11716:SF9">
    <property type="entry name" value="PHOSPHOLIPASE A2, MEMBRANE ASSOCIATED"/>
    <property type="match status" value="1"/>
</dbReference>
<dbReference type="Pfam" id="PF00068">
    <property type="entry name" value="Phospholip_A2_1"/>
    <property type="match status" value="1"/>
</dbReference>
<dbReference type="PRINTS" id="PR00389">
    <property type="entry name" value="PHPHLIPASEA2"/>
</dbReference>
<dbReference type="SMART" id="SM00085">
    <property type="entry name" value="PA2c"/>
    <property type="match status" value="1"/>
</dbReference>
<dbReference type="SUPFAM" id="SSF48619">
    <property type="entry name" value="Phospholipase A2, PLA2"/>
    <property type="match status" value="1"/>
</dbReference>
<dbReference type="PROSITE" id="PS00119">
    <property type="entry name" value="PA2_ASP"/>
    <property type="match status" value="1"/>
</dbReference>
<dbReference type="PROSITE" id="PS00118">
    <property type="entry name" value="PA2_HIS"/>
    <property type="match status" value="1"/>
</dbReference>
<comment type="function">
    <text evidence="5">Snake venom phospholipase A2 (PLA2) that has strong myotoxic activity with a low phospholipase A2 activity. PLA2 catalyzes the calcium-dependent hydrolysis of the 2-acyl groups in 3-sn-phosphoglycerides.</text>
</comment>
<comment type="catalytic activity">
    <reaction evidence="3 4">
        <text>a 1,2-diacyl-sn-glycero-3-phosphocholine + H2O = a 1-acyl-sn-glycero-3-phosphocholine + a fatty acid + H(+)</text>
        <dbReference type="Rhea" id="RHEA:15801"/>
        <dbReference type="ChEBI" id="CHEBI:15377"/>
        <dbReference type="ChEBI" id="CHEBI:15378"/>
        <dbReference type="ChEBI" id="CHEBI:28868"/>
        <dbReference type="ChEBI" id="CHEBI:57643"/>
        <dbReference type="ChEBI" id="CHEBI:58168"/>
        <dbReference type="EC" id="3.1.1.4"/>
    </reaction>
</comment>
<comment type="cofactor">
    <cofactor evidence="5">
        <name>Ca(2+)</name>
        <dbReference type="ChEBI" id="CHEBI:29108"/>
    </cofactor>
    <text evidence="5">Binds 1 Ca(2+) ion.</text>
</comment>
<comment type="subcellular location">
    <subcellularLocation>
        <location>Secreted</location>
    </subcellularLocation>
</comment>
<comment type="tissue specificity">
    <text>Expressed by the venom gland.</text>
</comment>
<comment type="miscellaneous">
    <text>Is abundantly expressed in Tokunoshima and Amami-Oshima P.flavoviridis venom, but is missing in Okinawa P.flavoviridis venom. It is thought that loss of BP-I in Okinawa P.flavoviridis is due to lack of necessity for a strong toxicity exerted by BP-I in the venom as far as they feed mostly on frogs.</text>
</comment>
<comment type="similarity">
    <text evidence="9">Belongs to the phospholipase A2 family. Group II subfamily. K49 sub-subfamily.</text>
</comment>
<comment type="caution">
    <text evidence="9">Binds calcium very weakly as one of the calcium-binding ligands is lost (Asp-&gt;Lys in position 64, which corresponds to 'Lys-49' in the current nomenclature).</text>
</comment>
<accession>P0DJJ8</accession>
<accession>B6F140</accession>
<accession>P20381</accession>